<sequence length="446" mass="49690">MHGHSRNGQAHVPRRKRRNRFVKKNGQCNVYFANLSNKSQRYMADIFTTCVDTRWRYMLMIFSAAFLVSWLFFGLLFWCIAFFHGDLEPSPSGPTAGGPGGNGGGAAPTAAKPCIMHVNGFLGAFLFSVETQTTIGYGFRCVTEECPLAVIAVVVQSIVGCVIDSFMIGTIMAKMPRPKKRAQTLLFSHHAVISVRDGKLCLMWRVGNLRKSHIVEAHVRAQLIKPYMTQEGEYLPLDQRDLNVGYDIGLDRIFLVSPIIIVHEIDEDSPLYGMGKEELESEDFEIVVILEGMVEATAMTTQARSSYLASEILWGHRFEPVVFEEKSHYKVDYSRFHKTYEVAGTPCCSARELQESKITVLPAPPPPPSAFCYENELALMSQEEEEMEEEAAAAAAVAAGLGLEAGSKEETGIIRMLEFGSHLDLERMQAATLPLDNISYRRESAI</sequence>
<proteinExistence type="evidence at protein level"/>
<dbReference type="EMBL" id="X87635">
    <property type="protein sequence ID" value="CAA60963.1"/>
    <property type="molecule type" value="mRNA"/>
</dbReference>
<dbReference type="EMBL" id="X83580">
    <property type="protein sequence ID" value="CAA58563.1"/>
    <property type="molecule type" value="mRNA"/>
</dbReference>
<dbReference type="EMBL" id="U27582">
    <property type="protein sequence ID" value="AAA87812.1"/>
    <property type="molecule type" value="mRNA"/>
</dbReference>
<dbReference type="PIR" id="S66268">
    <property type="entry name" value="S66268"/>
</dbReference>
<dbReference type="RefSeq" id="NP_446322.2">
    <property type="nucleotide sequence ID" value="NM_053870.2"/>
</dbReference>
<dbReference type="SMR" id="P52190"/>
<dbReference type="FunCoup" id="P52190">
    <property type="interactions" value="694"/>
</dbReference>
<dbReference type="STRING" id="10116.ENSRNOP00000053014"/>
<dbReference type="GlyGen" id="P52190">
    <property type="glycosylation" value="2 sites"/>
</dbReference>
<dbReference type="iPTMnet" id="P52190"/>
<dbReference type="PhosphoSitePlus" id="P52190"/>
<dbReference type="PaxDb" id="10116-ENSRNOP00000053014"/>
<dbReference type="GeneID" id="116649"/>
<dbReference type="KEGG" id="rno:116649"/>
<dbReference type="UCSC" id="RGD:621436">
    <property type="organism name" value="rat"/>
</dbReference>
<dbReference type="AGR" id="RGD:621436"/>
<dbReference type="CTD" id="3761"/>
<dbReference type="RGD" id="621436">
    <property type="gene designation" value="Kcnj4"/>
</dbReference>
<dbReference type="eggNOG" id="KOG3827">
    <property type="taxonomic scope" value="Eukaryota"/>
</dbReference>
<dbReference type="InParanoid" id="P52190"/>
<dbReference type="OrthoDB" id="273257at2759"/>
<dbReference type="PhylomeDB" id="P52190"/>
<dbReference type="Reactome" id="R-RNO-1296041">
    <property type="pathway name" value="Activation of G protein gated Potassium channels"/>
</dbReference>
<dbReference type="Reactome" id="R-RNO-1296053">
    <property type="pathway name" value="Classical Kir channels"/>
</dbReference>
<dbReference type="Reactome" id="R-RNO-5576886">
    <property type="pathway name" value="Phase 4 - resting membrane potential"/>
</dbReference>
<dbReference type="Reactome" id="R-RNO-997272">
    <property type="pathway name" value="Inhibition of voltage gated Ca2+ channels via Gbeta/gamma subunits"/>
</dbReference>
<dbReference type="PRO" id="PR:P52190"/>
<dbReference type="Proteomes" id="UP000002494">
    <property type="component" value="Unplaced"/>
</dbReference>
<dbReference type="GO" id="GO:0016323">
    <property type="term" value="C:basolateral plasma membrane"/>
    <property type="evidence" value="ECO:0000266"/>
    <property type="project" value="RGD"/>
</dbReference>
<dbReference type="GO" id="GO:0030659">
    <property type="term" value="C:cytoplasmic vesicle membrane"/>
    <property type="evidence" value="ECO:0007669"/>
    <property type="project" value="UniProtKB-SubCell"/>
</dbReference>
<dbReference type="GO" id="GO:0030425">
    <property type="term" value="C:dendrite"/>
    <property type="evidence" value="ECO:0000314"/>
    <property type="project" value="RGD"/>
</dbReference>
<dbReference type="GO" id="GO:0098978">
    <property type="term" value="C:glutamatergic synapse"/>
    <property type="evidence" value="ECO:0000266"/>
    <property type="project" value="RGD"/>
</dbReference>
<dbReference type="GO" id="GO:0034702">
    <property type="term" value="C:monoatomic ion channel complex"/>
    <property type="evidence" value="ECO:0007669"/>
    <property type="project" value="UniProtKB-KW"/>
</dbReference>
<dbReference type="GO" id="GO:0043025">
    <property type="term" value="C:neuronal cell body"/>
    <property type="evidence" value="ECO:0000314"/>
    <property type="project" value="RGD"/>
</dbReference>
<dbReference type="GO" id="GO:0005886">
    <property type="term" value="C:plasma membrane"/>
    <property type="evidence" value="ECO:0000318"/>
    <property type="project" value="GO_Central"/>
</dbReference>
<dbReference type="GO" id="GO:0045211">
    <property type="term" value="C:postsynaptic membrane"/>
    <property type="evidence" value="ECO:0000266"/>
    <property type="project" value="RGD"/>
</dbReference>
<dbReference type="GO" id="GO:0005242">
    <property type="term" value="F:inward rectifier potassium channel activity"/>
    <property type="evidence" value="ECO:0000314"/>
    <property type="project" value="UniProtKB"/>
</dbReference>
<dbReference type="GO" id="GO:0030165">
    <property type="term" value="F:PDZ domain binding"/>
    <property type="evidence" value="ECO:0000266"/>
    <property type="project" value="RGD"/>
</dbReference>
<dbReference type="GO" id="GO:0071260">
    <property type="term" value="P:cellular response to mechanical stimulus"/>
    <property type="evidence" value="ECO:0000270"/>
    <property type="project" value="RGD"/>
</dbReference>
<dbReference type="GO" id="GO:1990573">
    <property type="term" value="P:potassium ion import across plasma membrane"/>
    <property type="evidence" value="ECO:0000318"/>
    <property type="project" value="GO_Central"/>
</dbReference>
<dbReference type="GO" id="GO:0034765">
    <property type="term" value="P:regulation of monoatomic ion transmembrane transport"/>
    <property type="evidence" value="ECO:0000318"/>
    <property type="project" value="GO_Central"/>
</dbReference>
<dbReference type="FunFam" id="1.10.287.70:FF:000039">
    <property type="entry name" value="ATP-sensitive inward rectifier potassium channel 12"/>
    <property type="match status" value="1"/>
</dbReference>
<dbReference type="FunFam" id="2.60.40.1400:FF:000001">
    <property type="entry name" value="G protein-activated inward rectifier potassium channel 2"/>
    <property type="match status" value="1"/>
</dbReference>
<dbReference type="Gene3D" id="1.10.287.70">
    <property type="match status" value="1"/>
</dbReference>
<dbReference type="Gene3D" id="2.60.40.1400">
    <property type="entry name" value="G protein-activated inward rectifier potassium channel 1"/>
    <property type="match status" value="1"/>
</dbReference>
<dbReference type="InterPro" id="IPR014756">
    <property type="entry name" value="Ig_E-set"/>
</dbReference>
<dbReference type="InterPro" id="IPR041647">
    <property type="entry name" value="IRK_C"/>
</dbReference>
<dbReference type="InterPro" id="IPR016449">
    <property type="entry name" value="K_chnl_inward-rec_Kir"/>
</dbReference>
<dbReference type="InterPro" id="IPR003273">
    <property type="entry name" value="K_chnl_inward-rec_Kir2.3"/>
</dbReference>
<dbReference type="InterPro" id="IPR013518">
    <property type="entry name" value="K_chnl_inward-rec_Kir_cyto"/>
</dbReference>
<dbReference type="InterPro" id="IPR040445">
    <property type="entry name" value="Kir_TM"/>
</dbReference>
<dbReference type="PANTHER" id="PTHR11767">
    <property type="entry name" value="INWARD RECTIFIER POTASSIUM CHANNEL"/>
    <property type="match status" value="1"/>
</dbReference>
<dbReference type="PANTHER" id="PTHR11767:SF53">
    <property type="entry name" value="INWARD RECTIFIER POTASSIUM CHANNEL 4"/>
    <property type="match status" value="1"/>
</dbReference>
<dbReference type="Pfam" id="PF01007">
    <property type="entry name" value="IRK"/>
    <property type="match status" value="1"/>
</dbReference>
<dbReference type="Pfam" id="PF17655">
    <property type="entry name" value="IRK_C"/>
    <property type="match status" value="1"/>
</dbReference>
<dbReference type="PIRSF" id="PIRSF005465">
    <property type="entry name" value="GIRK_kir"/>
    <property type="match status" value="1"/>
</dbReference>
<dbReference type="PRINTS" id="PR01326">
    <property type="entry name" value="KIR23CHANNEL"/>
</dbReference>
<dbReference type="PRINTS" id="PR01320">
    <property type="entry name" value="KIRCHANNEL"/>
</dbReference>
<dbReference type="SUPFAM" id="SSF81296">
    <property type="entry name" value="E set domains"/>
    <property type="match status" value="1"/>
</dbReference>
<dbReference type="SUPFAM" id="SSF81324">
    <property type="entry name" value="Voltage-gated potassium channels"/>
    <property type="match status" value="1"/>
</dbReference>
<name>KCNJ4_RAT</name>
<keyword id="KW-1003">Cell membrane</keyword>
<keyword id="KW-0968">Cytoplasmic vesicle</keyword>
<keyword id="KW-0407">Ion channel</keyword>
<keyword id="KW-0406">Ion transport</keyword>
<keyword id="KW-0472">Membrane</keyword>
<keyword id="KW-0628">Postsynaptic cell membrane</keyword>
<keyword id="KW-0630">Potassium</keyword>
<keyword id="KW-0633">Potassium transport</keyword>
<keyword id="KW-1185">Reference proteome</keyword>
<keyword id="KW-0770">Synapse</keyword>
<keyword id="KW-0812">Transmembrane</keyword>
<keyword id="KW-1133">Transmembrane helix</keyword>
<keyword id="KW-0813">Transport</keyword>
<keyword id="KW-0851">Voltage-gated channel</keyword>
<comment type="function">
    <text evidence="7 8">Inward rectifier potassium channels are characterized by a greater tendency to allow potassium to flow into the cell rather than out of it. Their voltage dependence is regulated by the concentration of extracellular potassium; as external potassium is raised, the voltage range of the channel opening shifts to more positive voltages. The inward rectification is mainly due to the blockage of outward current by internal magnesium. Can be blocked by extracellular barium and cesium.</text>
</comment>
<comment type="catalytic activity">
    <reaction evidence="7 8">
        <text>K(+)(in) = K(+)(out)</text>
        <dbReference type="Rhea" id="RHEA:29463"/>
        <dbReference type="ChEBI" id="CHEBI:29103"/>
    </reaction>
</comment>
<comment type="subunit">
    <text evidence="2 3 5">Homomultimeric and heteromultimeric association with KCNJ2 and KCNJ12 (By similarity). Interacts with DLG2 and DLG4 (By similarity). Associates, via its PDZ-recognition domain, with a complex containing LIN7A, LIN7B, LIN7C, DLG1, CASK and APBA1 (PubMed:14960569). Interacts with TAX1BP3. TAX1BP3 competes with LIN7 family members for KCNJ4 binding (By similarity).</text>
</comment>
<comment type="subcellular location">
    <subcellularLocation>
        <location evidence="5">Cell membrane</location>
        <topology evidence="4">Multi-pass membrane protein</topology>
    </subcellularLocation>
    <subcellularLocation>
        <location evidence="3">Cytoplasmic vesicle membrane</location>
    </subcellularLocation>
    <subcellularLocation>
        <location evidence="3">Postsynaptic cell membrane</location>
        <topology evidence="4">Multi-pass membrane protein</topology>
    </subcellularLocation>
    <text evidence="3">TAX1BP3 binding promotes dissociation of KCNJ4 from LIN7 famaly members and KCNJ4 internalization.</text>
</comment>
<comment type="tissue specificity">
    <text evidence="6">Detected in kidney distal convoluted tubules (at protein level). Widely expressed throughout the brain. Also found in some peripheral tissues.</text>
</comment>
<comment type="similarity">
    <text evidence="9">Belongs to the inward rectifier-type potassium channel (TC 1.A.2.1) family. KCNJ4 subfamily.</text>
</comment>
<gene>
    <name type="primary">Kcnj4</name>
    <name type="synonym">Irk3</name>
</gene>
<accession>P52190</accession>
<accession>O35752</accession>
<protein>
    <recommendedName>
        <fullName>Inward rectifier potassium channel 4</fullName>
    </recommendedName>
    <alternativeName>
        <fullName>BIR11</fullName>
    </alternativeName>
    <alternativeName>
        <fullName>Brain inwardly rectifying K(+) channel 2</fullName>
    </alternativeName>
    <alternativeName>
        <fullName>Inward rectifier K(+) channel Kir2.3</fullName>
        <shortName>IRK-3</shortName>
    </alternativeName>
    <alternativeName>
        <fullName>Potassium channel, inwardly rectifying subfamily J member 4</fullName>
    </alternativeName>
</protein>
<evidence type="ECO:0000250" key="1"/>
<evidence type="ECO:0000250" key="2">
    <source>
        <dbReference type="UniProtKB" id="P48050"/>
    </source>
</evidence>
<evidence type="ECO:0000250" key="3">
    <source>
        <dbReference type="UniProtKB" id="P52189"/>
    </source>
</evidence>
<evidence type="ECO:0000255" key="4"/>
<evidence type="ECO:0000269" key="5">
    <source>
    </source>
</evidence>
<evidence type="ECO:0000269" key="6">
    <source>
    </source>
</evidence>
<evidence type="ECO:0000269" key="7">
    <source>
    </source>
</evidence>
<evidence type="ECO:0000269" key="8">
    <source>
    </source>
</evidence>
<evidence type="ECO:0000305" key="9"/>
<feature type="chain" id="PRO_0000154933" description="Inward rectifier potassium channel 4">
    <location>
        <begin position="1"/>
        <end position="446"/>
    </location>
</feature>
<feature type="topological domain" description="Cytoplasmic" evidence="1">
    <location>
        <begin position="1"/>
        <end position="55"/>
    </location>
</feature>
<feature type="transmembrane region" description="Helical; Name=M1" evidence="1">
    <location>
        <begin position="56"/>
        <end position="80"/>
    </location>
</feature>
<feature type="topological domain" description="Extracellular" evidence="1">
    <location>
        <begin position="81"/>
        <end position="120"/>
    </location>
</feature>
<feature type="intramembrane region" description="Helical; Pore-forming; Name=H5" evidence="1">
    <location>
        <begin position="121"/>
        <end position="132"/>
    </location>
</feature>
<feature type="intramembrane region" description="Pore-forming" evidence="1">
    <location>
        <begin position="133"/>
        <end position="139"/>
    </location>
</feature>
<feature type="topological domain" description="Extracellular" evidence="1">
    <location>
        <begin position="140"/>
        <end position="148"/>
    </location>
</feature>
<feature type="transmembrane region" description="Helical; Name=M2" evidence="1">
    <location>
        <begin position="149"/>
        <end position="170"/>
    </location>
</feature>
<feature type="topological domain" description="Cytoplasmic" evidence="1">
    <location>
        <begin position="171"/>
        <end position="446"/>
    </location>
</feature>
<feature type="region of interest" description="Val/Gly/Ala/Pro stretch">
    <location>
        <begin position="91"/>
        <end position="111"/>
    </location>
</feature>
<feature type="short sequence motif" description="Selectivity filter" evidence="1">
    <location>
        <begin position="134"/>
        <end position="139"/>
    </location>
</feature>
<feature type="short sequence motif" description="PDZ-binding" evidence="4">
    <location>
        <begin position="444"/>
        <end position="446"/>
    </location>
</feature>
<feature type="site" description="Role in the control of polyamine-mediated channel gating and in the blocking by intracellular magnesium" evidence="1">
    <location>
        <position position="164"/>
    </location>
</feature>
<feature type="sequence conflict" description="In Ref. 3; AAA87812." evidence="9" ref="3">
    <location>
        <begin position="53"/>
        <end position="54"/>
    </location>
</feature>
<feature type="sequence conflict" description="In Ref. 3; AAA87812." evidence="9" ref="3">
    <original>PSGPTAGG</original>
    <variation>LRAHGGS</variation>
    <location>
        <begin position="91"/>
        <end position="98"/>
    </location>
</feature>
<feature type="sequence conflict" description="In Ref. 3; AAA87812." evidence="9" ref="3">
    <original>T</original>
    <variation>R</variation>
    <location>
        <position position="109"/>
    </location>
</feature>
<feature type="sequence conflict" description="In Ref. 3; AAA87812." evidence="9" ref="3">
    <original>IMHVNGFL</original>
    <variation>YHACKRLFW</variation>
    <location>
        <begin position="115"/>
        <end position="122"/>
    </location>
</feature>
<feature type="sequence conflict" description="In Ref. 3; AAA87812." evidence="9" ref="3">
    <original>ET</original>
    <variation>GA</variation>
    <location>
        <begin position="130"/>
        <end position="131"/>
    </location>
</feature>
<feature type="sequence conflict" description="In Ref. 3; AAA87812." evidence="9" ref="3">
    <original>I</original>
    <variation>Y</variation>
    <location>
        <position position="135"/>
    </location>
</feature>
<feature type="sequence conflict" description="In Ref. 3; AAA87812." evidence="9" ref="3">
    <location>
        <position position="155"/>
    </location>
</feature>
<feature type="sequence conflict" description="In Ref. 3; AAA87812." evidence="9" ref="3">
    <original>P</original>
    <variation>A</variation>
    <location>
        <position position="176"/>
    </location>
</feature>
<feature type="sequence conflict" description="In Ref. 2." evidence="9" ref="2">
    <original>P</original>
    <variation>G</variation>
    <location>
        <position position="176"/>
    </location>
</feature>
<feature type="sequence conflict" description="In Ref. 2." evidence="9" ref="2">
    <original>P</original>
    <variation>S</variation>
    <location>
        <position position="178"/>
    </location>
</feature>
<feature type="sequence conflict" description="In Ref. 3; AAA87812." evidence="9" ref="3">
    <original>DG</original>
    <variation>T</variation>
    <location>
        <begin position="197"/>
        <end position="198"/>
    </location>
</feature>
<feature type="sequence conflict" description="In Ref. 3; AAA87812." evidence="9" ref="3">
    <original>RVG</original>
    <variation>GWV</variation>
    <location>
        <begin position="205"/>
        <end position="207"/>
    </location>
</feature>
<feature type="sequence conflict" description="In Ref. 3; AAA87812." evidence="9" ref="3">
    <original>V</original>
    <variation>A</variation>
    <location>
        <position position="294"/>
    </location>
</feature>
<feature type="sequence conflict" description="In Ref. 2; CAA60963." evidence="9" ref="2">
    <original>A</original>
    <variation>V</variation>
    <location>
        <position position="298"/>
    </location>
</feature>
<feature type="sequence conflict" description="In Ref. 3; AAA87812." evidence="9" ref="3">
    <original>L</original>
    <variation>Q</variation>
    <location>
        <position position="308"/>
    </location>
</feature>
<reference key="1">
    <citation type="journal article" date="1995" name="FEBS Lett.">
        <title>Cloning, functional expression and mRNA distribution of an inwardly rectifying potassium channel protein.</title>
        <authorList>
            <person name="Falk T."/>
            <person name="Meyerhof W."/>
            <person name="Corrette B.J."/>
            <person name="Schaefer J."/>
            <person name="Bauer C.K."/>
            <person name="Schwarz J.R."/>
            <person name="Richter D."/>
        </authorList>
    </citation>
    <scope>NUCLEOTIDE SEQUENCE [MRNA]</scope>
    <scope>FUNCTION</scope>
    <scope>TRANSPORTER ACTIVITY</scope>
    <source>
        <strain>GH3/B6</strain>
    </source>
</reference>
<reference key="2">
    <citation type="journal article" date="1994" name="Recept. Channels">
        <title>Cloning and expression of a family of inward rectifier potassium channels.</title>
        <authorList>
            <person name="Bond C.T."/>
            <person name="Pessia M."/>
            <person name="Xia X.-M."/>
            <person name="Lagrutta A."/>
            <person name="Kavanaugh M.P."/>
            <person name="Adelman J.P."/>
        </authorList>
    </citation>
    <scope>NUCLEOTIDE SEQUENCE [MRNA]</scope>
    <source>
        <strain>Sprague-Dawley</strain>
        <tissue>Brain</tissue>
    </source>
</reference>
<reference key="3">
    <citation type="journal article" date="1995" name="Proc. Natl. Acad. Sci. U.S.A.">
        <title>Cloning and expression of two brain-specific inwardly rectifying potassium channels.</title>
        <authorList>
            <person name="Bredt D.S."/>
            <person name="Wang T.L."/>
            <person name="Cohen N.A."/>
            <person name="Guggino W.B."/>
            <person name="Snyder S.H."/>
        </authorList>
    </citation>
    <scope>NUCLEOTIDE SEQUENCE [MRNA]</scope>
    <scope>FUNCTION</scope>
    <scope>TRANSPORTER ACTIVITY</scope>
</reference>
<reference key="4">
    <citation type="journal article" date="2004" name="J. Biol. Chem.">
        <title>A multiprotein trafficking complex composed of SAP97, CASK, Veli, and Mint1 is associated with inward rectifier Kir2 potassium channels.</title>
        <authorList>
            <person name="Leonoudakis D."/>
            <person name="Conti L.R."/>
            <person name="Radeke C.M."/>
            <person name="McGuire L.M."/>
            <person name="Vandenberg C.A."/>
        </authorList>
    </citation>
    <scope>ASSOCIATION WITH A COMPLEX CONTAINING CASK; LIN7A; LIN7B; LIN7C; APBA1 AND DLG1</scope>
</reference>
<reference key="5">
    <citation type="journal article" date="2006" name="Mol. Biol. Cell">
        <title>TIP-1 has PDZ scaffold antagonist activity.</title>
        <authorList>
            <person name="Alewine C."/>
            <person name="Olsen O."/>
            <person name="Wade J.B."/>
            <person name="Welling P.A."/>
        </authorList>
    </citation>
    <scope>TISSUE SPECIFICITY</scope>
</reference>
<organism>
    <name type="scientific">Rattus norvegicus</name>
    <name type="common">Rat</name>
    <dbReference type="NCBI Taxonomy" id="10116"/>
    <lineage>
        <taxon>Eukaryota</taxon>
        <taxon>Metazoa</taxon>
        <taxon>Chordata</taxon>
        <taxon>Craniata</taxon>
        <taxon>Vertebrata</taxon>
        <taxon>Euteleostomi</taxon>
        <taxon>Mammalia</taxon>
        <taxon>Eutheria</taxon>
        <taxon>Euarchontoglires</taxon>
        <taxon>Glires</taxon>
        <taxon>Rodentia</taxon>
        <taxon>Myomorpha</taxon>
        <taxon>Muroidea</taxon>
        <taxon>Muridae</taxon>
        <taxon>Murinae</taxon>
        <taxon>Rattus</taxon>
    </lineage>
</organism>